<feature type="chain" id="PRO_0000333687" description="Methylated-DNA--protein-cysteine methyltransferase">
    <location>
        <begin position="1"/>
        <end position="194"/>
    </location>
</feature>
<feature type="active site" description="Nucleophile; methyl group acceptor" evidence="2">
    <location>
        <position position="156"/>
    </location>
</feature>
<feature type="binding site" evidence="1">
    <location>
        <position position="125"/>
    </location>
    <ligand>
        <name>DNA</name>
        <dbReference type="ChEBI" id="CHEBI:16991"/>
    </ligand>
</feature>
<feature type="binding site" evidence="1">
    <location>
        <position position="139"/>
    </location>
    <ligand>
        <name>DNA</name>
        <dbReference type="ChEBI" id="CHEBI:16991"/>
    </ligand>
</feature>
<feature type="binding site" evidence="1">
    <location>
        <position position="162"/>
    </location>
    <ligand>
        <name>DNA</name>
        <dbReference type="ChEBI" id="CHEBI:16991"/>
    </ligand>
</feature>
<keyword id="KW-0227">DNA damage</keyword>
<keyword id="KW-0234">DNA repair</keyword>
<keyword id="KW-0238">DNA-binding</keyword>
<keyword id="KW-0489">Methyltransferase</keyword>
<keyword id="KW-0539">Nucleus</keyword>
<keyword id="KW-1185">Reference proteome</keyword>
<keyword id="KW-0808">Transferase</keyword>
<dbReference type="EC" id="2.1.1.63"/>
<dbReference type="EMBL" id="CP000501">
    <property type="protein sequence ID" value="ABN68366.1"/>
    <property type="molecule type" value="Genomic_DNA"/>
</dbReference>
<dbReference type="RefSeq" id="XP_001386395.1">
    <property type="nucleotide sequence ID" value="XM_001386358.1"/>
</dbReference>
<dbReference type="SMR" id="A3LZM4"/>
<dbReference type="STRING" id="322104.A3LZM4"/>
<dbReference type="GeneID" id="4840509"/>
<dbReference type="KEGG" id="pic:PICST_49425"/>
<dbReference type="eggNOG" id="KOG4062">
    <property type="taxonomic scope" value="Eukaryota"/>
</dbReference>
<dbReference type="HOGENOM" id="CLU_000445_52_2_1"/>
<dbReference type="InParanoid" id="A3LZM4"/>
<dbReference type="OMA" id="YTFIETE"/>
<dbReference type="OrthoDB" id="1907495at2759"/>
<dbReference type="Proteomes" id="UP000002258">
    <property type="component" value="Chromosome 7"/>
</dbReference>
<dbReference type="GO" id="GO:0005634">
    <property type="term" value="C:nucleus"/>
    <property type="evidence" value="ECO:0007669"/>
    <property type="project" value="UniProtKB-SubCell"/>
</dbReference>
<dbReference type="GO" id="GO:0003677">
    <property type="term" value="F:DNA binding"/>
    <property type="evidence" value="ECO:0007669"/>
    <property type="project" value="UniProtKB-KW"/>
</dbReference>
<dbReference type="GO" id="GO:0003908">
    <property type="term" value="F:methylated-DNA-[protein]-cysteine S-methyltransferase activity"/>
    <property type="evidence" value="ECO:0007669"/>
    <property type="project" value="UniProtKB-EC"/>
</dbReference>
<dbReference type="GO" id="GO:0006281">
    <property type="term" value="P:DNA repair"/>
    <property type="evidence" value="ECO:0007669"/>
    <property type="project" value="UniProtKB-KW"/>
</dbReference>
<dbReference type="GO" id="GO:0032259">
    <property type="term" value="P:methylation"/>
    <property type="evidence" value="ECO:0007669"/>
    <property type="project" value="UniProtKB-KW"/>
</dbReference>
<dbReference type="CDD" id="cd06445">
    <property type="entry name" value="ATase"/>
    <property type="match status" value="1"/>
</dbReference>
<dbReference type="FunFam" id="1.10.10.10:FF:000214">
    <property type="entry name" value="Methylated-DNA--protein-cysteine methyltransferase"/>
    <property type="match status" value="1"/>
</dbReference>
<dbReference type="Gene3D" id="1.10.10.10">
    <property type="entry name" value="Winged helix-like DNA-binding domain superfamily/Winged helix DNA-binding domain"/>
    <property type="match status" value="1"/>
</dbReference>
<dbReference type="InterPro" id="IPR001497">
    <property type="entry name" value="MethylDNA_cys_MeTrfase_AS"/>
</dbReference>
<dbReference type="InterPro" id="IPR014048">
    <property type="entry name" value="MethylDNA_cys_MeTrfase_DNA-bd"/>
</dbReference>
<dbReference type="InterPro" id="IPR036217">
    <property type="entry name" value="MethylDNA_cys_MeTrfase_DNAb"/>
</dbReference>
<dbReference type="InterPro" id="IPR036388">
    <property type="entry name" value="WH-like_DNA-bd_sf"/>
</dbReference>
<dbReference type="NCBIfam" id="TIGR00589">
    <property type="entry name" value="ogt"/>
    <property type="match status" value="1"/>
</dbReference>
<dbReference type="PANTHER" id="PTHR10815">
    <property type="entry name" value="METHYLATED-DNA--PROTEIN-CYSTEINE METHYLTRANSFERASE"/>
    <property type="match status" value="1"/>
</dbReference>
<dbReference type="PANTHER" id="PTHR10815:SF13">
    <property type="entry name" value="METHYLATED-DNA--PROTEIN-CYSTEINE METHYLTRANSFERASE"/>
    <property type="match status" value="1"/>
</dbReference>
<dbReference type="Pfam" id="PF01035">
    <property type="entry name" value="DNA_binding_1"/>
    <property type="match status" value="1"/>
</dbReference>
<dbReference type="SUPFAM" id="SSF46767">
    <property type="entry name" value="Methylated DNA-protein cysteine methyltransferase, C-terminal domain"/>
    <property type="match status" value="1"/>
</dbReference>
<dbReference type="PROSITE" id="PS00374">
    <property type="entry name" value="MGMT"/>
    <property type="match status" value="1"/>
</dbReference>
<gene>
    <name type="primary">MGT1</name>
    <name type="ORF">PICST_49425</name>
</gene>
<protein>
    <recommendedName>
        <fullName>Methylated-DNA--protein-cysteine methyltransferase</fullName>
        <ecNumber>2.1.1.63</ecNumber>
    </recommendedName>
    <alternativeName>
        <fullName>6-O-methylguanine-DNA methyltransferase</fullName>
        <shortName>MGMT</shortName>
    </alternativeName>
    <alternativeName>
        <fullName>DNA repair MTase</fullName>
    </alternativeName>
    <alternativeName>
        <fullName>O-6-methylguanine-DNA-alkyltransferase</fullName>
    </alternativeName>
</protein>
<comment type="function">
    <text evidence="1">Involved in the cellular defense against the biological effects of O6-methylguanine (O6-MeG) and O4-methylthymine (O4-MeT) in DNA. Repairs the methylated nucleobase in DNA by stoichiometrically transferring the methyl group to a cysteine residue in the enzyme. This is a suicide reaction: the enzyme is irreversibly inactivated.</text>
</comment>
<comment type="catalytic activity">
    <reaction evidence="2">
        <text>a 6-O-methyl-2'-deoxyguanosine in DNA + L-cysteinyl-[protein] = S-methyl-L-cysteinyl-[protein] + a 2'-deoxyguanosine in DNA</text>
        <dbReference type="Rhea" id="RHEA:24000"/>
        <dbReference type="Rhea" id="RHEA-COMP:10131"/>
        <dbReference type="Rhea" id="RHEA-COMP:10132"/>
        <dbReference type="Rhea" id="RHEA-COMP:11367"/>
        <dbReference type="Rhea" id="RHEA-COMP:11368"/>
        <dbReference type="ChEBI" id="CHEBI:29950"/>
        <dbReference type="ChEBI" id="CHEBI:82612"/>
        <dbReference type="ChEBI" id="CHEBI:85445"/>
        <dbReference type="ChEBI" id="CHEBI:85448"/>
        <dbReference type="EC" id="2.1.1.63"/>
    </reaction>
</comment>
<comment type="catalytic activity">
    <reaction evidence="2">
        <text>a 4-O-methyl-thymidine in DNA + L-cysteinyl-[protein] = a thymidine in DNA + S-methyl-L-cysteinyl-[protein]</text>
        <dbReference type="Rhea" id="RHEA:53428"/>
        <dbReference type="Rhea" id="RHEA-COMP:10131"/>
        <dbReference type="Rhea" id="RHEA-COMP:10132"/>
        <dbReference type="Rhea" id="RHEA-COMP:13555"/>
        <dbReference type="Rhea" id="RHEA-COMP:13556"/>
        <dbReference type="ChEBI" id="CHEBI:29950"/>
        <dbReference type="ChEBI" id="CHEBI:82612"/>
        <dbReference type="ChEBI" id="CHEBI:137386"/>
        <dbReference type="ChEBI" id="CHEBI:137387"/>
        <dbReference type="EC" id="2.1.1.63"/>
    </reaction>
</comment>
<comment type="subcellular location">
    <subcellularLocation>
        <location evidence="1">Nucleus</location>
    </subcellularLocation>
</comment>
<comment type="miscellaneous">
    <text>This enzyme catalyzes only one turnover and therefore is not strictly catalytic. According to one definition, an enzyme is a biocatalyst that acts repeatedly and over many reaction cycles.</text>
</comment>
<comment type="similarity">
    <text evidence="3">Belongs to the MGMT family.</text>
</comment>
<organism>
    <name type="scientific">Scheffersomyces stipitis (strain ATCC 58785 / CBS 6054 / NBRC 10063 / NRRL Y-11545)</name>
    <name type="common">Yeast</name>
    <name type="synonym">Pichia stipitis</name>
    <dbReference type="NCBI Taxonomy" id="322104"/>
    <lineage>
        <taxon>Eukaryota</taxon>
        <taxon>Fungi</taxon>
        <taxon>Dikarya</taxon>
        <taxon>Ascomycota</taxon>
        <taxon>Saccharomycotina</taxon>
        <taxon>Pichiomycetes</taxon>
        <taxon>Debaryomycetaceae</taxon>
        <taxon>Scheffersomyces</taxon>
    </lineage>
</organism>
<evidence type="ECO:0000250" key="1"/>
<evidence type="ECO:0000255" key="2">
    <source>
        <dbReference type="PROSITE-ProRule" id="PRU10017"/>
    </source>
</evidence>
<evidence type="ECO:0000305" key="3"/>
<reference key="1">
    <citation type="journal article" date="2007" name="Nat. Biotechnol.">
        <title>Genome sequence of the lignocellulose-bioconverting and xylose-fermenting yeast Pichia stipitis.</title>
        <authorList>
            <person name="Jeffries T.W."/>
            <person name="Grigoriev I.V."/>
            <person name="Grimwood J."/>
            <person name="Laplaza J.M."/>
            <person name="Aerts A."/>
            <person name="Salamov A."/>
            <person name="Schmutz J."/>
            <person name="Lindquist E."/>
            <person name="Dehal P."/>
            <person name="Shapiro H."/>
            <person name="Jin Y.-S."/>
            <person name="Passoth V."/>
            <person name="Richardson P.M."/>
        </authorList>
    </citation>
    <scope>NUCLEOTIDE SEQUENCE [LARGE SCALE GENOMIC DNA]</scope>
    <source>
        <strain>ATCC 58785 / CBS 6054 / NBRC 10063 / NRRL Y-11545</strain>
    </source>
</reference>
<name>MGMT_PICST</name>
<sequence length="194" mass="21494">MKNLFYSFVSGSEYLVLVALDTEGCVYYASAGELNSQASMVELMEKDFLKAPEFRVNSLNSASSSLVNKKSEVKIKDTLEKFKSLIDFENKDEKIPYKVVFGTPLQRKVWDYLVNELPVGSISTYQKIAQHLGMPNSSRAIGNCVGANRIAVVIPCHRVIGSSGKITGYRYGTNIKKTILQNELGSKYGSTITN</sequence>
<proteinExistence type="inferred from homology"/>
<accession>A3LZM4</accession>